<gene>
    <name type="primary">HERV-K104</name>
</gene>
<feature type="chain" id="PRO_0000199543" description="Endogenous retrovirus group K member 104 Pro protein">
    <location>
        <begin position="1"/>
        <end position="156"/>
    </location>
</feature>
<feature type="domain" description="Peptidase A2" evidence="3">
    <location>
        <begin position="21"/>
        <end position="96"/>
    </location>
</feature>
<feature type="domain" description="G-patch" evidence="2">
    <location>
        <begin position="111"/>
        <end position="156"/>
    </location>
</feature>
<feature type="active site" evidence="1">
    <location>
        <position position="26"/>
    </location>
</feature>
<protein>
    <recommendedName>
        <fullName>Endogenous retrovirus group K member 104 Pro protein</fullName>
    </recommendedName>
    <alternativeName>
        <fullName>HERV-K104 Pro protein</fullName>
    </alternativeName>
    <alternativeName>
        <fullName>HERV-K_5q13.3 provirus ancestral Pro protein</fullName>
        <ecNumber>3.4.23.50</ecNumber>
    </alternativeName>
    <alternativeName>
        <fullName>Protease</fullName>
    </alternativeName>
    <alternativeName>
        <fullName>Proteinase</fullName>
        <shortName>PR</shortName>
    </alternativeName>
</protein>
<name>VPK04_HUMAN</name>
<evidence type="ECO:0000250" key="1"/>
<evidence type="ECO:0000255" key="2">
    <source>
        <dbReference type="PROSITE-ProRule" id="PRU00092"/>
    </source>
</evidence>
<evidence type="ECO:0000255" key="3">
    <source>
        <dbReference type="PROSITE-ProRule" id="PRU00275"/>
    </source>
</evidence>
<evidence type="ECO:0000305" key="4"/>
<comment type="function">
    <text evidence="1">Retroviral proteases have roles in the processing of the primary translation products and the maturation of the viral particle. Endogenous Pro proteins may have kept, lost or modified their original function during evolution (By similarity).</text>
</comment>
<comment type="catalytic activity">
    <reaction>
        <text>Processing at the authentic HIV-1 PR recognition site and release of the mature p17 matrix and the p24 capsid protein, as a result of the cleavage of the -SQNY-|-PIVQ- cleavage site.</text>
        <dbReference type="EC" id="3.4.23.50"/>
    </reaction>
</comment>
<comment type="subunit">
    <text evidence="1">Active as a homodimer.</text>
</comment>
<comment type="alternative products">
    <event type="ribosomal frameshifting"/>
    <isoform>
        <id>P63124-1</id>
        <name>1</name>
        <sequence type="displayed"/>
    </isoform>
    <text>This protein is synthesized as Gag-Pro and Gag-Pro-Pol polyprotein. These polyproteins are thought, by similarity with type-B retroviruses, to be generated by -1 frameshifts occurring at the Gag-Pro and Pro-Pol genes boundaries.</text>
</comment>
<comment type="PTM">
    <text evidence="1">Autoproteolytically processed at the N-terminus. Expected C-terminal autoprocessing not detected. The sequence shown is that of the processed Pro protein (By similarity).</text>
</comment>
<comment type="similarity">
    <text evidence="4">Belongs to the peptidase A2 family. HERV class-II K(HML-2) subfamily.</text>
</comment>
<keyword id="KW-0064">Aspartyl protease</keyword>
<keyword id="KW-0895">ERV</keyword>
<keyword id="KW-0378">Hydrolase</keyword>
<keyword id="KW-0645">Protease</keyword>
<keyword id="KW-1185">Reference proteome</keyword>
<keyword id="KW-0688">Ribosomal frameshifting</keyword>
<keyword id="KW-0814">Transposable element</keyword>
<accession>P63124</accession>
<sequence length="156" mass="17121">WASQVSENRPVCKAIIQGKQFEGLVDTEADVSIIALNQWPKNWPKQKAVTGLVGIGTASEVYQSTEILHCLGPDNQESTVQPMITSIPLNLWGQDLLQQWGAEITMPAPLYSPTSQKIMTKMGYIPGKGLGKNEDGIKVPVEAKINQKREGIGYPF</sequence>
<dbReference type="EC" id="3.4.23.50"/>
<dbReference type="EMBL" id="AF164612">
    <property type="status" value="NOT_ANNOTATED_CDS"/>
    <property type="molecule type" value="Genomic_DNA"/>
</dbReference>
<dbReference type="SMR" id="P63124"/>
<dbReference type="iPTMnet" id="P63124"/>
<dbReference type="PhosphoSitePlus" id="P63124"/>
<dbReference type="BioMuta" id="HERV-K104"/>
<dbReference type="DMDM" id="52000855"/>
<dbReference type="PeptideAtlas" id="P63124"/>
<dbReference type="neXtProt" id="NX_P63124"/>
<dbReference type="InParanoid" id="P63124"/>
<dbReference type="PAN-GO" id="P63124">
    <property type="GO annotations" value="0 GO annotations based on evolutionary models"/>
</dbReference>
<dbReference type="PhylomeDB" id="P63124"/>
<dbReference type="Pharos" id="P63124">
    <property type="development level" value="Tdark"/>
</dbReference>
<dbReference type="Proteomes" id="UP000005640">
    <property type="component" value="Unplaced"/>
</dbReference>
<dbReference type="RNAct" id="P63124">
    <property type="molecule type" value="protein"/>
</dbReference>
<dbReference type="GO" id="GO:0004190">
    <property type="term" value="F:aspartic-type endopeptidase activity"/>
    <property type="evidence" value="ECO:0007669"/>
    <property type="project" value="UniProtKB-KW"/>
</dbReference>
<dbReference type="GO" id="GO:0003676">
    <property type="term" value="F:nucleic acid binding"/>
    <property type="evidence" value="ECO:0007669"/>
    <property type="project" value="InterPro"/>
</dbReference>
<dbReference type="GO" id="GO:0006508">
    <property type="term" value="P:proteolysis"/>
    <property type="evidence" value="ECO:0007669"/>
    <property type="project" value="UniProtKB-KW"/>
</dbReference>
<dbReference type="GO" id="GO:0075523">
    <property type="term" value="P:viral translational frameshifting"/>
    <property type="evidence" value="ECO:0007669"/>
    <property type="project" value="UniProtKB-KW"/>
</dbReference>
<dbReference type="CDD" id="cd05482">
    <property type="entry name" value="HIV_retropepsin_like"/>
    <property type="match status" value="1"/>
</dbReference>
<dbReference type="Gene3D" id="2.40.70.10">
    <property type="entry name" value="Acid Proteases"/>
    <property type="match status" value="1"/>
</dbReference>
<dbReference type="InterPro" id="IPR000467">
    <property type="entry name" value="G_patch_dom"/>
</dbReference>
<dbReference type="InterPro" id="IPR051592">
    <property type="entry name" value="HERV-K_Pro_peptidase_A2"/>
</dbReference>
<dbReference type="InterPro" id="IPR001995">
    <property type="entry name" value="Peptidase_A2_cat"/>
</dbReference>
<dbReference type="InterPro" id="IPR021109">
    <property type="entry name" value="Peptidase_aspartic_dom_sf"/>
</dbReference>
<dbReference type="InterPro" id="IPR034170">
    <property type="entry name" value="Retropepsin-like_cat_dom"/>
</dbReference>
<dbReference type="InterPro" id="IPR018061">
    <property type="entry name" value="Retropepsins"/>
</dbReference>
<dbReference type="PANTHER" id="PTHR19422">
    <property type="entry name" value="GAG RETROVIRAL POLYPROTEIN"/>
    <property type="match status" value="1"/>
</dbReference>
<dbReference type="PANTHER" id="PTHR19422:SF123">
    <property type="entry name" value="RT1 CLASS I, LOCUS CE15"/>
    <property type="match status" value="1"/>
</dbReference>
<dbReference type="Pfam" id="PF01585">
    <property type="entry name" value="G-patch"/>
    <property type="match status" value="1"/>
</dbReference>
<dbReference type="Pfam" id="PF00077">
    <property type="entry name" value="RVP"/>
    <property type="match status" value="1"/>
</dbReference>
<dbReference type="SMART" id="SM00443">
    <property type="entry name" value="G_patch"/>
    <property type="match status" value="1"/>
</dbReference>
<dbReference type="SUPFAM" id="SSF50630">
    <property type="entry name" value="Acid proteases"/>
    <property type="match status" value="1"/>
</dbReference>
<dbReference type="PROSITE" id="PS50175">
    <property type="entry name" value="ASP_PROT_RETROV"/>
    <property type="match status" value="1"/>
</dbReference>
<dbReference type="PROSITE" id="PS50174">
    <property type="entry name" value="G_PATCH"/>
    <property type="match status" value="1"/>
</dbReference>
<proteinExistence type="inferred from homology"/>
<reference key="1">
    <citation type="journal article" date="1999" name="Curr. Biol.">
        <title>Many human endogenous retrovirus K (HERV-K) proviruses are unique to humans.</title>
        <authorList>
            <person name="Barbulescu M."/>
            <person name="Turner G."/>
            <person name="Seaman M.I."/>
            <person name="Deinard A.S."/>
            <person name="Kidd K.K."/>
            <person name="Lenz J."/>
        </authorList>
    </citation>
    <scope>NUCLEOTIDE SEQUENCE [GENOMIC DNA]</scope>
</reference>
<organism>
    <name type="scientific">Homo sapiens</name>
    <name type="common">Human</name>
    <dbReference type="NCBI Taxonomy" id="9606"/>
    <lineage>
        <taxon>Eukaryota</taxon>
        <taxon>Metazoa</taxon>
        <taxon>Chordata</taxon>
        <taxon>Craniata</taxon>
        <taxon>Vertebrata</taxon>
        <taxon>Euteleostomi</taxon>
        <taxon>Mammalia</taxon>
        <taxon>Eutheria</taxon>
        <taxon>Euarchontoglires</taxon>
        <taxon>Primates</taxon>
        <taxon>Haplorrhini</taxon>
        <taxon>Catarrhini</taxon>
        <taxon>Hominidae</taxon>
        <taxon>Homo</taxon>
    </lineage>
</organism>